<accession>A1SU12</accession>
<sequence length="104" mass="12077">MSTPNTHLLCLIATDLRKHFFAVLVGMLIVCSAIYNVYTTHKTRGLVTQIERLAQDKDDLMMEWRNLLIEEHTLDEHSRIRRIALKKLSMSQATKKNSVLVELR</sequence>
<comment type="function">
    <text evidence="1">Essential cell division protein. May link together the upstream cell division proteins, which are predominantly cytoplasmic, with the downstream cell division proteins, which are predominantly periplasmic.</text>
</comment>
<comment type="subunit">
    <text evidence="1">Part of a complex composed of FtsB, FtsL and FtsQ.</text>
</comment>
<comment type="subcellular location">
    <subcellularLocation>
        <location evidence="1">Cell inner membrane</location>
        <topology evidence="1">Single-pass type II membrane protein</topology>
    </subcellularLocation>
    <text evidence="1">Localizes to the division septum where it forms a ring structure.</text>
</comment>
<comment type="similarity">
    <text evidence="1">Belongs to the FtsL family.</text>
</comment>
<comment type="sequence caution" evidence="2">
    <conflict type="erroneous initiation">
        <sequence resource="EMBL-CDS" id="ABM02977"/>
    </conflict>
    <text>Truncated N-terminus.</text>
</comment>
<reference key="1">
    <citation type="journal article" date="2008" name="BMC Genomics">
        <title>Genomics of an extreme psychrophile, Psychromonas ingrahamii.</title>
        <authorList>
            <person name="Riley M."/>
            <person name="Staley J.T."/>
            <person name="Danchin A."/>
            <person name="Wang T.Z."/>
            <person name="Brettin T.S."/>
            <person name="Hauser L.J."/>
            <person name="Land M.L."/>
            <person name="Thompson L.S."/>
        </authorList>
    </citation>
    <scope>NUCLEOTIDE SEQUENCE [LARGE SCALE GENOMIC DNA]</scope>
    <source>
        <strain>DSM 17664 / CCUG 51855 / 37</strain>
    </source>
</reference>
<keyword id="KW-0131">Cell cycle</keyword>
<keyword id="KW-0132">Cell division</keyword>
<keyword id="KW-0997">Cell inner membrane</keyword>
<keyword id="KW-1003">Cell membrane</keyword>
<keyword id="KW-0472">Membrane</keyword>
<keyword id="KW-1185">Reference proteome</keyword>
<keyword id="KW-0812">Transmembrane</keyword>
<keyword id="KW-1133">Transmembrane helix</keyword>
<feature type="chain" id="PRO_0000414566" description="Cell division protein FtsL">
    <location>
        <begin position="1"/>
        <end position="104"/>
    </location>
</feature>
<feature type="topological domain" description="Cytoplasmic" evidence="1">
    <location>
        <begin position="1"/>
        <end position="19"/>
    </location>
</feature>
<feature type="transmembrane region" description="Helical" evidence="1">
    <location>
        <begin position="20"/>
        <end position="39"/>
    </location>
</feature>
<feature type="topological domain" description="Periplasmic" evidence="1">
    <location>
        <begin position="40"/>
        <end position="104"/>
    </location>
</feature>
<gene>
    <name evidence="1" type="primary">ftsL</name>
    <name type="ordered locus">Ping_1140</name>
</gene>
<organism>
    <name type="scientific">Psychromonas ingrahamii (strain DSM 17664 / CCUG 51855 / 37)</name>
    <dbReference type="NCBI Taxonomy" id="357804"/>
    <lineage>
        <taxon>Bacteria</taxon>
        <taxon>Pseudomonadati</taxon>
        <taxon>Pseudomonadota</taxon>
        <taxon>Gammaproteobacteria</taxon>
        <taxon>Alteromonadales</taxon>
        <taxon>Psychromonadaceae</taxon>
        <taxon>Psychromonas</taxon>
    </lineage>
</organism>
<protein>
    <recommendedName>
        <fullName evidence="1">Cell division protein FtsL</fullName>
    </recommendedName>
</protein>
<evidence type="ECO:0000255" key="1">
    <source>
        <dbReference type="HAMAP-Rule" id="MF_00910"/>
    </source>
</evidence>
<evidence type="ECO:0000305" key="2"/>
<name>FTSL_PSYIN</name>
<proteinExistence type="inferred from homology"/>
<dbReference type="EMBL" id="CP000510">
    <property type="protein sequence ID" value="ABM02977.1"/>
    <property type="status" value="ALT_INIT"/>
    <property type="molecule type" value="Genomic_DNA"/>
</dbReference>
<dbReference type="RefSeq" id="WP_041766028.1">
    <property type="nucleotide sequence ID" value="NC_008709.1"/>
</dbReference>
<dbReference type="SMR" id="A1SU12"/>
<dbReference type="STRING" id="357804.Ping_1140"/>
<dbReference type="KEGG" id="pin:Ping_1140"/>
<dbReference type="eggNOG" id="COG3116">
    <property type="taxonomic scope" value="Bacteria"/>
</dbReference>
<dbReference type="HOGENOM" id="CLU_156524_2_0_6"/>
<dbReference type="Proteomes" id="UP000000639">
    <property type="component" value="Chromosome"/>
</dbReference>
<dbReference type="GO" id="GO:0032153">
    <property type="term" value="C:cell division site"/>
    <property type="evidence" value="ECO:0007669"/>
    <property type="project" value="UniProtKB-UniRule"/>
</dbReference>
<dbReference type="GO" id="GO:0005886">
    <property type="term" value="C:plasma membrane"/>
    <property type="evidence" value="ECO:0007669"/>
    <property type="project" value="UniProtKB-SubCell"/>
</dbReference>
<dbReference type="GO" id="GO:0043093">
    <property type="term" value="P:FtsZ-dependent cytokinesis"/>
    <property type="evidence" value="ECO:0007669"/>
    <property type="project" value="UniProtKB-UniRule"/>
</dbReference>
<dbReference type="HAMAP" id="MF_00910">
    <property type="entry name" value="FtsL"/>
    <property type="match status" value="1"/>
</dbReference>
<dbReference type="InterPro" id="IPR011922">
    <property type="entry name" value="Cell_div_FtsL"/>
</dbReference>
<dbReference type="NCBIfam" id="TIGR02209">
    <property type="entry name" value="ftsL_broad"/>
    <property type="match status" value="1"/>
</dbReference>
<dbReference type="PANTHER" id="PTHR37479">
    <property type="entry name" value="CELL DIVISION PROTEIN FTSL"/>
    <property type="match status" value="1"/>
</dbReference>
<dbReference type="PANTHER" id="PTHR37479:SF1">
    <property type="entry name" value="CELL DIVISION PROTEIN FTSL"/>
    <property type="match status" value="1"/>
</dbReference>
<dbReference type="Pfam" id="PF04999">
    <property type="entry name" value="FtsL"/>
    <property type="match status" value="1"/>
</dbReference>